<evidence type="ECO:0000255" key="1"/>
<evidence type="ECO:0000255" key="2">
    <source>
        <dbReference type="PROSITE-ProRule" id="PRU00686"/>
    </source>
</evidence>
<evidence type="ECO:0000305" key="3"/>
<evidence type="ECO:0007744" key="4">
    <source>
    </source>
</evidence>
<organism>
    <name type="scientific">Arabidopsis thaliana</name>
    <name type="common">Mouse-ear cress</name>
    <dbReference type="NCBI Taxonomy" id="3702"/>
    <lineage>
        <taxon>Eukaryota</taxon>
        <taxon>Viridiplantae</taxon>
        <taxon>Streptophyta</taxon>
        <taxon>Embryophyta</taxon>
        <taxon>Tracheophyta</taxon>
        <taxon>Spermatophyta</taxon>
        <taxon>Magnoliopsida</taxon>
        <taxon>eudicotyledons</taxon>
        <taxon>Gunneridae</taxon>
        <taxon>Pentapetalae</taxon>
        <taxon>rosids</taxon>
        <taxon>malvids</taxon>
        <taxon>Brassicales</taxon>
        <taxon>Brassicaceae</taxon>
        <taxon>Camelineae</taxon>
        <taxon>Arabidopsis</taxon>
    </lineage>
</organism>
<name>GRS12_ARATH</name>
<feature type="transit peptide" description="Chloroplast" evidence="1 4">
    <location>
        <begin position="1"/>
        <end position="61"/>
    </location>
</feature>
<feature type="chain" id="PRO_0000268732" description="Monothiol glutaredoxin-S12, chloroplastic">
    <location>
        <begin position="62"/>
        <end position="179"/>
    </location>
</feature>
<feature type="domain" description="Glutaredoxin" evidence="2">
    <location>
        <begin position="75"/>
        <end position="176"/>
    </location>
</feature>
<feature type="binding site" evidence="1">
    <location>
        <position position="95"/>
    </location>
    <ligand>
        <name>[2Fe-2S] cluster</name>
        <dbReference type="ChEBI" id="CHEBI:190135"/>
        <note>ligand shared between dimeric partners</note>
    </ligand>
</feature>
<feature type="modified residue" description="N-acetylalanine" evidence="4">
    <location>
        <position position="62"/>
    </location>
</feature>
<feature type="sequence conflict" description="In Ref. 4; AAM64584." evidence="3" ref="4">
    <original>L</original>
    <variation>F</variation>
    <location>
        <position position="104"/>
    </location>
</feature>
<sequence>MVAATVNLANMTWTSLNSNPAISFSMLSGIRNLGMLPFRRCLKPTVIGIASWPPLRCSSVKAMSSSSSSSGSTLEETVKTTVAENPVVVYSKTWCSYSSQVKSLFKSLQVEPLVVELDQLGSEGSQLQNVLEKITGQYTVPNVFIGGKHIGGCSDTLQLHNKGELEAILAEANGKNGQT</sequence>
<dbReference type="EMBL" id="AC006569">
    <property type="protein sequence ID" value="AAD21761.1"/>
    <property type="molecule type" value="Genomic_DNA"/>
</dbReference>
<dbReference type="EMBL" id="CP002685">
    <property type="protein sequence ID" value="AEC06987.1"/>
    <property type="molecule type" value="Genomic_DNA"/>
</dbReference>
<dbReference type="EMBL" id="AY094445">
    <property type="protein sequence ID" value="AAM19817.1"/>
    <property type="molecule type" value="mRNA"/>
</dbReference>
<dbReference type="EMBL" id="AY122897">
    <property type="protein sequence ID" value="AAM67430.1"/>
    <property type="molecule type" value="mRNA"/>
</dbReference>
<dbReference type="EMBL" id="AY087023">
    <property type="protein sequence ID" value="AAM64584.1"/>
    <property type="molecule type" value="mRNA"/>
</dbReference>
<dbReference type="PIR" id="B84587">
    <property type="entry name" value="B84587"/>
</dbReference>
<dbReference type="RefSeq" id="NP_179617.1">
    <molecule id="Q8LBS4-1"/>
    <property type="nucleotide sequence ID" value="NM_127586.3"/>
</dbReference>
<dbReference type="SMR" id="Q8LBS4"/>
<dbReference type="BioGRID" id="1899">
    <property type="interactions" value="5"/>
</dbReference>
<dbReference type="FunCoup" id="Q8LBS4">
    <property type="interactions" value="676"/>
</dbReference>
<dbReference type="IntAct" id="Q8LBS4">
    <property type="interactions" value="1"/>
</dbReference>
<dbReference type="STRING" id="3702.Q8LBS4"/>
<dbReference type="iPTMnet" id="Q8LBS4"/>
<dbReference type="ProteomicsDB" id="222273">
    <molecule id="Q8LBS4-1"/>
</dbReference>
<dbReference type="EnsemblPlants" id="AT2G20270.1">
    <molecule id="Q8LBS4-1"/>
    <property type="protein sequence ID" value="AT2G20270.1"/>
    <property type="gene ID" value="AT2G20270"/>
</dbReference>
<dbReference type="GeneID" id="816546"/>
<dbReference type="Gramene" id="AT2G20270.1">
    <molecule id="Q8LBS4-1"/>
    <property type="protein sequence ID" value="AT2G20270.1"/>
    <property type="gene ID" value="AT2G20270"/>
</dbReference>
<dbReference type="KEGG" id="ath:AT2G20270"/>
<dbReference type="Araport" id="AT2G20270"/>
<dbReference type="TAIR" id="AT2G20270">
    <property type="gene designation" value="GRXS12"/>
</dbReference>
<dbReference type="HOGENOM" id="CLU_026126_5_0_1"/>
<dbReference type="InParanoid" id="Q8LBS4"/>
<dbReference type="OrthoDB" id="418495at2759"/>
<dbReference type="PhylomeDB" id="Q8LBS4"/>
<dbReference type="PRO" id="PR:Q8LBS4"/>
<dbReference type="Proteomes" id="UP000006548">
    <property type="component" value="Chromosome 2"/>
</dbReference>
<dbReference type="ExpressionAtlas" id="Q8LBS4">
    <property type="expression patterns" value="baseline and differential"/>
</dbReference>
<dbReference type="GO" id="GO:0009507">
    <property type="term" value="C:chloroplast"/>
    <property type="evidence" value="ECO:0007669"/>
    <property type="project" value="UniProtKB-SubCell"/>
</dbReference>
<dbReference type="GO" id="GO:0051537">
    <property type="term" value="F:2 iron, 2 sulfur cluster binding"/>
    <property type="evidence" value="ECO:0007669"/>
    <property type="project" value="UniProtKB-KW"/>
</dbReference>
<dbReference type="GO" id="GO:0046872">
    <property type="term" value="F:metal ion binding"/>
    <property type="evidence" value="ECO:0007669"/>
    <property type="project" value="UniProtKB-KW"/>
</dbReference>
<dbReference type="CDD" id="cd03419">
    <property type="entry name" value="GRX_GRXh_1_2_like"/>
    <property type="match status" value="1"/>
</dbReference>
<dbReference type="FunFam" id="3.40.30.10:FF:000217">
    <property type="entry name" value="Glutaredoxin-C5 chloroplastic"/>
    <property type="match status" value="1"/>
</dbReference>
<dbReference type="Gene3D" id="3.40.30.10">
    <property type="entry name" value="Glutaredoxin"/>
    <property type="match status" value="1"/>
</dbReference>
<dbReference type="InterPro" id="IPR002109">
    <property type="entry name" value="Glutaredoxin"/>
</dbReference>
<dbReference type="InterPro" id="IPR011899">
    <property type="entry name" value="Glutaredoxin_euk/vir"/>
</dbReference>
<dbReference type="InterPro" id="IPR014025">
    <property type="entry name" value="Glutaredoxin_subgr"/>
</dbReference>
<dbReference type="InterPro" id="IPR036249">
    <property type="entry name" value="Thioredoxin-like_sf"/>
</dbReference>
<dbReference type="NCBIfam" id="TIGR02180">
    <property type="entry name" value="GRX_euk"/>
    <property type="match status" value="1"/>
</dbReference>
<dbReference type="PANTHER" id="PTHR45694">
    <property type="entry name" value="GLUTAREDOXIN 2"/>
    <property type="match status" value="1"/>
</dbReference>
<dbReference type="PANTHER" id="PTHR45694:SF12">
    <property type="entry name" value="MONOTHIOL GLUTAREDOXIN-S12, CHLOROPLASTIC"/>
    <property type="match status" value="1"/>
</dbReference>
<dbReference type="Pfam" id="PF00462">
    <property type="entry name" value="Glutaredoxin"/>
    <property type="match status" value="1"/>
</dbReference>
<dbReference type="PRINTS" id="PR00160">
    <property type="entry name" value="GLUTAREDOXIN"/>
</dbReference>
<dbReference type="SUPFAM" id="SSF52833">
    <property type="entry name" value="Thioredoxin-like"/>
    <property type="match status" value="1"/>
</dbReference>
<dbReference type="PROSITE" id="PS51354">
    <property type="entry name" value="GLUTAREDOXIN_2"/>
    <property type="match status" value="1"/>
</dbReference>
<keyword id="KW-0001">2Fe-2S</keyword>
<keyword id="KW-0007">Acetylation</keyword>
<keyword id="KW-0025">Alternative splicing</keyword>
<keyword id="KW-0150">Chloroplast</keyword>
<keyword id="KW-0408">Iron</keyword>
<keyword id="KW-0411">Iron-sulfur</keyword>
<keyword id="KW-0479">Metal-binding</keyword>
<keyword id="KW-0934">Plastid</keyword>
<keyword id="KW-0676">Redox-active center</keyword>
<keyword id="KW-1185">Reference proteome</keyword>
<keyword id="KW-0809">Transit peptide</keyword>
<protein>
    <recommendedName>
        <fullName>Monothiol glutaredoxin-S12, chloroplastic</fullName>
        <shortName>AtGrxS12</shortName>
    </recommendedName>
</protein>
<gene>
    <name type="primary">GRXS12</name>
    <name type="ordered locus">At2g20270</name>
    <name type="ORF">F11A3.18</name>
</gene>
<proteinExistence type="evidence at protein level"/>
<accession>Q8LBS4</accession>
<accession>Q9SK75</accession>
<reference key="1">
    <citation type="journal article" date="1999" name="Nature">
        <title>Sequence and analysis of chromosome 2 of the plant Arabidopsis thaliana.</title>
        <authorList>
            <person name="Lin X."/>
            <person name="Kaul S."/>
            <person name="Rounsley S.D."/>
            <person name="Shea T.P."/>
            <person name="Benito M.-I."/>
            <person name="Town C.D."/>
            <person name="Fujii C.Y."/>
            <person name="Mason T.M."/>
            <person name="Bowman C.L."/>
            <person name="Barnstead M.E."/>
            <person name="Feldblyum T.V."/>
            <person name="Buell C.R."/>
            <person name="Ketchum K.A."/>
            <person name="Lee J.J."/>
            <person name="Ronning C.M."/>
            <person name="Koo H.L."/>
            <person name="Moffat K.S."/>
            <person name="Cronin L.A."/>
            <person name="Shen M."/>
            <person name="Pai G."/>
            <person name="Van Aken S."/>
            <person name="Umayam L."/>
            <person name="Tallon L.J."/>
            <person name="Gill J.E."/>
            <person name="Adams M.D."/>
            <person name="Carrera A.J."/>
            <person name="Creasy T.H."/>
            <person name="Goodman H.M."/>
            <person name="Somerville C.R."/>
            <person name="Copenhaver G.P."/>
            <person name="Preuss D."/>
            <person name="Nierman W.C."/>
            <person name="White O."/>
            <person name="Eisen J.A."/>
            <person name="Salzberg S.L."/>
            <person name="Fraser C.M."/>
            <person name="Venter J.C."/>
        </authorList>
    </citation>
    <scope>NUCLEOTIDE SEQUENCE [LARGE SCALE GENOMIC DNA]</scope>
    <source>
        <strain>cv. Columbia</strain>
    </source>
</reference>
<reference key="2">
    <citation type="journal article" date="2017" name="Plant J.">
        <title>Araport11: a complete reannotation of the Arabidopsis thaliana reference genome.</title>
        <authorList>
            <person name="Cheng C.Y."/>
            <person name="Krishnakumar V."/>
            <person name="Chan A.P."/>
            <person name="Thibaud-Nissen F."/>
            <person name="Schobel S."/>
            <person name="Town C.D."/>
        </authorList>
    </citation>
    <scope>GENOME REANNOTATION</scope>
    <source>
        <strain>cv. Columbia</strain>
    </source>
</reference>
<reference key="3">
    <citation type="journal article" date="2003" name="Science">
        <title>Empirical analysis of transcriptional activity in the Arabidopsis genome.</title>
        <authorList>
            <person name="Yamada K."/>
            <person name="Lim J."/>
            <person name="Dale J.M."/>
            <person name="Chen H."/>
            <person name="Shinn P."/>
            <person name="Palm C.J."/>
            <person name="Southwick A.M."/>
            <person name="Wu H.C."/>
            <person name="Kim C.J."/>
            <person name="Nguyen M."/>
            <person name="Pham P.K."/>
            <person name="Cheuk R.F."/>
            <person name="Karlin-Newmann G."/>
            <person name="Liu S.X."/>
            <person name="Lam B."/>
            <person name="Sakano H."/>
            <person name="Wu T."/>
            <person name="Yu G."/>
            <person name="Miranda M."/>
            <person name="Quach H.L."/>
            <person name="Tripp M."/>
            <person name="Chang C.H."/>
            <person name="Lee J.M."/>
            <person name="Toriumi M.J."/>
            <person name="Chan M.M."/>
            <person name="Tang C.C."/>
            <person name="Onodera C.S."/>
            <person name="Deng J.M."/>
            <person name="Akiyama K."/>
            <person name="Ansari Y."/>
            <person name="Arakawa T."/>
            <person name="Banh J."/>
            <person name="Banno F."/>
            <person name="Bowser L."/>
            <person name="Brooks S.Y."/>
            <person name="Carninci P."/>
            <person name="Chao Q."/>
            <person name="Choy N."/>
            <person name="Enju A."/>
            <person name="Goldsmith A.D."/>
            <person name="Gurjal M."/>
            <person name="Hansen N.F."/>
            <person name="Hayashizaki Y."/>
            <person name="Johnson-Hopson C."/>
            <person name="Hsuan V.W."/>
            <person name="Iida K."/>
            <person name="Karnes M."/>
            <person name="Khan S."/>
            <person name="Koesema E."/>
            <person name="Ishida J."/>
            <person name="Jiang P.X."/>
            <person name="Jones T."/>
            <person name="Kawai J."/>
            <person name="Kamiya A."/>
            <person name="Meyers C."/>
            <person name="Nakajima M."/>
            <person name="Narusaka M."/>
            <person name="Seki M."/>
            <person name="Sakurai T."/>
            <person name="Satou M."/>
            <person name="Tamse R."/>
            <person name="Vaysberg M."/>
            <person name="Wallender E.K."/>
            <person name="Wong C."/>
            <person name="Yamamura Y."/>
            <person name="Yuan S."/>
            <person name="Shinozaki K."/>
            <person name="Davis R.W."/>
            <person name="Theologis A."/>
            <person name="Ecker J.R."/>
        </authorList>
    </citation>
    <scope>NUCLEOTIDE SEQUENCE [LARGE SCALE MRNA]</scope>
    <source>
        <strain>cv. Columbia</strain>
    </source>
</reference>
<reference key="4">
    <citation type="submission" date="2002-03" db="EMBL/GenBank/DDBJ databases">
        <title>Full-length cDNA from Arabidopsis thaliana.</title>
        <authorList>
            <person name="Brover V.V."/>
            <person name="Troukhan M.E."/>
            <person name="Alexandrov N.A."/>
            <person name="Lu Y.-P."/>
            <person name="Flavell R.B."/>
            <person name="Feldmann K.A."/>
        </authorList>
    </citation>
    <scope>NUCLEOTIDE SEQUENCE [LARGE SCALE MRNA]</scope>
</reference>
<reference key="5">
    <citation type="journal article" date="2004" name="Cell. Mol. Life Sci.">
        <title>Plant glutaredoxins: still mysterious reducing systems.</title>
        <authorList>
            <person name="Rouhier N."/>
            <person name="Gelhaye E."/>
            <person name="Jacquot J.-P."/>
        </authorList>
    </citation>
    <scope>GENE FAMILY</scope>
    <scope>NOMENCLATURE</scope>
</reference>
<reference key="6">
    <citation type="journal article" date="2006" name="J. Exp. Bot.">
        <title>Genome-wide analysis of plant glutaredoxin systems.</title>
        <authorList>
            <person name="Rouhier N."/>
            <person name="Couturier J."/>
            <person name="Jacquot J.-P."/>
        </authorList>
    </citation>
    <scope>GENE FAMILY</scope>
</reference>
<reference key="7">
    <citation type="journal article" date="2012" name="Mol. Cell. Proteomics">
        <title>Comparative large-scale characterisation of plant vs. mammal proteins reveals similar and idiosyncratic N-alpha acetylation features.</title>
        <authorList>
            <person name="Bienvenut W.V."/>
            <person name="Sumpton D."/>
            <person name="Martinez A."/>
            <person name="Lilla S."/>
            <person name="Espagne C."/>
            <person name="Meinnel T."/>
            <person name="Giglione C."/>
        </authorList>
    </citation>
    <scope>ACETYLATION [LARGE SCALE ANALYSIS] AT ALA-62</scope>
    <scope>CLEAVAGE OF TRANSIT PEPTIDE [LARGE SCALE ANALYSIS] AFTER LYS-61</scope>
    <scope>IDENTIFICATION BY MASS SPECTROMETRY [LARGE SCALE ANALYSIS]</scope>
</reference>
<comment type="function">
    <text evidence="3">May only reduce GSH-thiol disulfides, but not protein disulfides.</text>
</comment>
<comment type="subcellular location">
    <subcellularLocation>
        <location evidence="3">Plastid</location>
        <location evidence="3">Chloroplast</location>
    </subcellularLocation>
</comment>
<comment type="alternative products">
    <event type="alternative splicing"/>
    <isoform>
        <id>Q8LBS4-1</id>
        <name>1</name>
        <sequence type="displayed"/>
    </isoform>
    <text>A number of isoforms are produced. According to EST sequences.</text>
</comment>
<comment type="similarity">
    <text evidence="3">Belongs to the glutaredoxin family. CPYC subfamily.</text>
</comment>